<organism>
    <name type="scientific">Corynebacterium jeikeium (strain K411)</name>
    <dbReference type="NCBI Taxonomy" id="306537"/>
    <lineage>
        <taxon>Bacteria</taxon>
        <taxon>Bacillati</taxon>
        <taxon>Actinomycetota</taxon>
        <taxon>Actinomycetes</taxon>
        <taxon>Mycobacteriales</taxon>
        <taxon>Corynebacteriaceae</taxon>
        <taxon>Corynebacterium</taxon>
    </lineage>
</organism>
<keyword id="KW-0012">Acyltransferase</keyword>
<keyword id="KW-0028">Amino-acid biosynthesis</keyword>
<keyword id="KW-0963">Cytoplasm</keyword>
<keyword id="KW-0486">Methionine biosynthesis</keyword>
<keyword id="KW-1185">Reference proteome</keyword>
<keyword id="KW-0808">Transferase</keyword>
<name>METXA_CORJK</name>
<evidence type="ECO:0000255" key="1">
    <source>
        <dbReference type="HAMAP-Rule" id="MF_00296"/>
    </source>
</evidence>
<gene>
    <name evidence="1" type="primary">metXA</name>
    <name type="ordered locus">jk1695</name>
</gene>
<sequence length="395" mass="42548">MNPEFLPASGASRTVSIGDVVTEAGVTIFDAELRYFAFYDSPDGAADYAEFSAGPEPGLSPEERPIVLIEHALTGDGNAADWWADMVGPNKPIDTTRYLVLCANVLGGCQGSTGPSSPHPDGQAWGSRFPGLSIRDMVTAERQLLERVGVTKIHALIGASMGGARVLEWSLMHPEMINAALPIAVSARASAWQIGLQSSQIRFIEADPAWHGGDYYDTGEVPSHGLGQARRIAHLTYRGELEVDERFGVDPQNGENPYGPYRDPHQRFAVESYLDRQAEKLVARFDAGSYVVLTDALNRHDVGRSRGGMNAALGSCEVPTMVVGVDTDILYPLHQQEHLSRNLGDFIGMSKITSPTGHDGFLIESRQMGQALAKFLAKAEIIAEGTEGAEGTARA</sequence>
<reference key="1">
    <citation type="journal article" date="2005" name="J. Bacteriol.">
        <title>Complete genome sequence and analysis of the multiresistant nosocomial pathogen Corynebacterium jeikeium K411, a lipid-requiring bacterium of the human skin flora.</title>
        <authorList>
            <person name="Tauch A."/>
            <person name="Kaiser O."/>
            <person name="Hain T."/>
            <person name="Goesmann A."/>
            <person name="Weisshaar B."/>
            <person name="Albersmeier A."/>
            <person name="Bekel T."/>
            <person name="Bischoff N."/>
            <person name="Brune I."/>
            <person name="Chakraborty T."/>
            <person name="Kalinowski J."/>
            <person name="Meyer F."/>
            <person name="Rupp O."/>
            <person name="Schneiker S."/>
            <person name="Viehoever P."/>
            <person name="Puehler A."/>
        </authorList>
    </citation>
    <scope>NUCLEOTIDE SEQUENCE [LARGE SCALE GENOMIC DNA]</scope>
    <source>
        <strain>K411</strain>
    </source>
</reference>
<comment type="function">
    <text evidence="1">Transfers an acetyl group from acetyl-CoA to L-homoserine, forming acetyl-L-homoserine.</text>
</comment>
<comment type="catalytic activity">
    <reaction evidence="1">
        <text>L-homoserine + acetyl-CoA = O-acetyl-L-homoserine + CoA</text>
        <dbReference type="Rhea" id="RHEA:13701"/>
        <dbReference type="ChEBI" id="CHEBI:57287"/>
        <dbReference type="ChEBI" id="CHEBI:57288"/>
        <dbReference type="ChEBI" id="CHEBI:57476"/>
        <dbReference type="ChEBI" id="CHEBI:57716"/>
        <dbReference type="EC" id="2.3.1.31"/>
    </reaction>
</comment>
<comment type="pathway">
    <text evidence="1">Amino-acid biosynthesis; L-methionine biosynthesis via de novo pathway; O-acetyl-L-homoserine from L-homoserine: step 1/1.</text>
</comment>
<comment type="subunit">
    <text evidence="1">Homodimer.</text>
</comment>
<comment type="subcellular location">
    <subcellularLocation>
        <location evidence="1">Cytoplasm</location>
    </subcellularLocation>
</comment>
<comment type="similarity">
    <text evidence="1">Belongs to the AB hydrolase superfamily. MetX family.</text>
</comment>
<protein>
    <recommendedName>
        <fullName evidence="1">Homoserine O-acetyltransferase</fullName>
        <shortName evidence="1">HAT</shortName>
        <ecNumber evidence="1">2.3.1.31</ecNumber>
    </recommendedName>
    <alternativeName>
        <fullName evidence="1">Homoserine transacetylase</fullName>
        <shortName evidence="1">HTA</shortName>
    </alternativeName>
</protein>
<feature type="chain" id="PRO_0000231868" description="Homoserine O-acetyltransferase">
    <location>
        <begin position="1"/>
        <end position="395"/>
    </location>
</feature>
<feature type="domain" description="AB hydrolase-1" evidence="1">
    <location>
        <begin position="65"/>
        <end position="363"/>
    </location>
</feature>
<feature type="active site" description="Nucleophile" evidence="1">
    <location>
        <position position="160"/>
    </location>
</feature>
<feature type="active site" evidence="1">
    <location>
        <position position="328"/>
    </location>
</feature>
<feature type="active site" evidence="1">
    <location>
        <position position="358"/>
    </location>
</feature>
<feature type="binding site" evidence="1">
    <location>
        <position position="230"/>
    </location>
    <ligand>
        <name>substrate</name>
    </ligand>
</feature>
<feature type="binding site" evidence="1">
    <location>
        <position position="359"/>
    </location>
    <ligand>
        <name>substrate</name>
    </ligand>
</feature>
<proteinExistence type="inferred from homology"/>
<accession>Q4JTI5</accession>
<dbReference type="EC" id="2.3.1.31" evidence="1"/>
<dbReference type="EMBL" id="CR931997">
    <property type="protein sequence ID" value="CAI37872.1"/>
    <property type="molecule type" value="Genomic_DNA"/>
</dbReference>
<dbReference type="RefSeq" id="WP_011274064.1">
    <property type="nucleotide sequence ID" value="NC_007164.1"/>
</dbReference>
<dbReference type="SMR" id="Q4JTI5"/>
<dbReference type="STRING" id="306537.jk1695"/>
<dbReference type="ESTHER" id="corjk-q4jti5">
    <property type="family name" value="Homoserine_transacetylase"/>
</dbReference>
<dbReference type="KEGG" id="cjk:jk1695"/>
<dbReference type="PATRIC" id="fig|306537.10.peg.1716"/>
<dbReference type="eggNOG" id="COG2021">
    <property type="taxonomic scope" value="Bacteria"/>
</dbReference>
<dbReference type="HOGENOM" id="CLU_028760_1_0_11"/>
<dbReference type="OrthoDB" id="9800754at2"/>
<dbReference type="UniPathway" id="UPA00051">
    <property type="reaction ID" value="UER00074"/>
</dbReference>
<dbReference type="Proteomes" id="UP000000545">
    <property type="component" value="Chromosome"/>
</dbReference>
<dbReference type="GO" id="GO:0005737">
    <property type="term" value="C:cytoplasm"/>
    <property type="evidence" value="ECO:0007669"/>
    <property type="project" value="UniProtKB-SubCell"/>
</dbReference>
<dbReference type="GO" id="GO:0004414">
    <property type="term" value="F:homoserine O-acetyltransferase activity"/>
    <property type="evidence" value="ECO:0007669"/>
    <property type="project" value="UniProtKB-UniRule"/>
</dbReference>
<dbReference type="GO" id="GO:0009092">
    <property type="term" value="P:homoserine metabolic process"/>
    <property type="evidence" value="ECO:0007669"/>
    <property type="project" value="TreeGrafter"/>
</dbReference>
<dbReference type="GO" id="GO:0009086">
    <property type="term" value="P:methionine biosynthetic process"/>
    <property type="evidence" value="ECO:0007669"/>
    <property type="project" value="UniProtKB-UniRule"/>
</dbReference>
<dbReference type="Gene3D" id="3.40.50.1820">
    <property type="entry name" value="alpha/beta hydrolase"/>
    <property type="match status" value="1"/>
</dbReference>
<dbReference type="HAMAP" id="MF_00296">
    <property type="entry name" value="MetX_acyltransf"/>
    <property type="match status" value="1"/>
</dbReference>
<dbReference type="InterPro" id="IPR000073">
    <property type="entry name" value="AB_hydrolase_1"/>
</dbReference>
<dbReference type="InterPro" id="IPR029058">
    <property type="entry name" value="AB_hydrolase_fold"/>
</dbReference>
<dbReference type="InterPro" id="IPR008220">
    <property type="entry name" value="HAT_MetX-like"/>
</dbReference>
<dbReference type="NCBIfam" id="TIGR01392">
    <property type="entry name" value="homoserO_Ac_trn"/>
    <property type="match status" value="1"/>
</dbReference>
<dbReference type="NCBIfam" id="NF001209">
    <property type="entry name" value="PRK00175.1"/>
    <property type="match status" value="1"/>
</dbReference>
<dbReference type="PANTHER" id="PTHR32268">
    <property type="entry name" value="HOMOSERINE O-ACETYLTRANSFERASE"/>
    <property type="match status" value="1"/>
</dbReference>
<dbReference type="PANTHER" id="PTHR32268:SF11">
    <property type="entry name" value="HOMOSERINE O-ACETYLTRANSFERASE"/>
    <property type="match status" value="1"/>
</dbReference>
<dbReference type="Pfam" id="PF00561">
    <property type="entry name" value="Abhydrolase_1"/>
    <property type="match status" value="1"/>
</dbReference>
<dbReference type="PIRSF" id="PIRSF000443">
    <property type="entry name" value="Homoser_Ac_trans"/>
    <property type="match status" value="1"/>
</dbReference>
<dbReference type="SUPFAM" id="SSF53474">
    <property type="entry name" value="alpha/beta-Hydrolases"/>
    <property type="match status" value="1"/>
</dbReference>